<reference key="1">
    <citation type="journal article" date="2004" name="Biochem. J.">
        <title>Characterization of a calmodulin-regulated Ca2+-dependent-protein-kinase-related protein kinase, AtCRK1, from Arabidopsis.</title>
        <authorList>
            <person name="Wang Y."/>
            <person name="Liang S."/>
            <person name="Xie Q.-G."/>
            <person name="Lu Y.-T."/>
        </authorList>
    </citation>
    <scope>NUCLEOTIDE SEQUENCE [MRNA]</scope>
    <scope>FUNCTION</scope>
    <scope>AUTOPHOSPHORYLATION</scope>
    <scope>CATALYTIC ACTIVITY</scope>
    <scope>INTERACTION WITH CALMODULIN</scope>
    <scope>ACTIVITY REGULATION</scope>
    <scope>BIOPHYSICOCHEMICAL PROPERTIES</scope>
</reference>
<reference key="2">
    <citation type="submission" date="1999-05" db="EMBL/GenBank/DDBJ databases">
        <title>CDPK-related kinases in Arabidopsis.</title>
        <authorList>
            <person name="Choi J.H."/>
            <person name="Lala H."/>
        </authorList>
    </citation>
    <scope>NUCLEOTIDE SEQUENCE [MRNA]</scope>
    <source>
        <strain>cv. Columbia</strain>
        <tissue>Seedling hypocotyl</tissue>
    </source>
</reference>
<reference key="3">
    <citation type="journal article" date="1999" name="Nature">
        <title>Sequence and analysis of chromosome 2 of the plant Arabidopsis thaliana.</title>
        <authorList>
            <person name="Lin X."/>
            <person name="Kaul S."/>
            <person name="Rounsley S.D."/>
            <person name="Shea T.P."/>
            <person name="Benito M.-I."/>
            <person name="Town C.D."/>
            <person name="Fujii C.Y."/>
            <person name="Mason T.M."/>
            <person name="Bowman C.L."/>
            <person name="Barnstead M.E."/>
            <person name="Feldblyum T.V."/>
            <person name="Buell C.R."/>
            <person name="Ketchum K.A."/>
            <person name="Lee J.J."/>
            <person name="Ronning C.M."/>
            <person name="Koo H.L."/>
            <person name="Moffat K.S."/>
            <person name="Cronin L.A."/>
            <person name="Shen M."/>
            <person name="Pai G."/>
            <person name="Van Aken S."/>
            <person name="Umayam L."/>
            <person name="Tallon L.J."/>
            <person name="Gill J.E."/>
            <person name="Adams M.D."/>
            <person name="Carrera A.J."/>
            <person name="Creasy T.H."/>
            <person name="Goodman H.M."/>
            <person name="Somerville C.R."/>
            <person name="Copenhaver G.P."/>
            <person name="Preuss D."/>
            <person name="Nierman W.C."/>
            <person name="White O."/>
            <person name="Eisen J.A."/>
            <person name="Salzberg S.L."/>
            <person name="Fraser C.M."/>
            <person name="Venter J.C."/>
        </authorList>
    </citation>
    <scope>NUCLEOTIDE SEQUENCE [LARGE SCALE GENOMIC DNA]</scope>
    <source>
        <strain>cv. Columbia</strain>
    </source>
</reference>
<reference key="4">
    <citation type="journal article" date="2017" name="Plant J.">
        <title>Araport11: a complete reannotation of the Arabidopsis thaliana reference genome.</title>
        <authorList>
            <person name="Cheng C.Y."/>
            <person name="Krishnakumar V."/>
            <person name="Chan A.P."/>
            <person name="Thibaud-Nissen F."/>
            <person name="Schobel S."/>
            <person name="Town C.D."/>
        </authorList>
    </citation>
    <scope>GENOME REANNOTATION</scope>
    <source>
        <strain>cv. Columbia</strain>
    </source>
</reference>
<reference key="5">
    <citation type="journal article" date="2003" name="Gravit. Space Biol. Bull.">
        <title>Calcium-regulated protein kinases of plants.</title>
        <authorList>
            <person name="Harmon A.C."/>
        </authorList>
    </citation>
    <scope>REVIEW</scope>
    <scope>GENE FAMILY</scope>
</reference>
<reference key="6">
    <citation type="journal article" date="2003" name="Plant Physiol.">
        <title>The Arabidopsis CDPK-SnRK superfamily of protein kinases.</title>
        <authorList>
            <person name="Hrabak E.M."/>
            <person name="Chan C.W.M."/>
            <person name="Gribskov M."/>
            <person name="Harper J.F."/>
            <person name="Choi J.H."/>
            <person name="Halford N."/>
            <person name="Kudla J."/>
            <person name="Luan S."/>
            <person name="Nimmo H.G."/>
            <person name="Sussman M.R."/>
            <person name="Thomas M."/>
            <person name="Walker-Simmons K."/>
            <person name="Zhu J.-K."/>
            <person name="Harmon A.C."/>
        </authorList>
    </citation>
    <scope>GENE FAMILY</scope>
    <scope>NOMENCLATURE</scope>
    <source>
        <strain>cv. Columbia</strain>
    </source>
</reference>
<reference key="7">
    <citation type="journal article" date="2005" name="Plant Sci.">
        <title>Biochemical and expression analysis of an Arabidopsis calcium-dependent protein kinase-related kinase.</title>
        <authorList>
            <person name="Du W."/>
            <person name="Wang Y."/>
            <person name="Liang S."/>
            <person name="Lu Y.-T."/>
        </authorList>
        <dbReference type="AGRICOLA" id="IND43694487"/>
    </citation>
    <scope>GENE FAMILY</scope>
    <source>
        <strain>cv. Columbia</strain>
    </source>
</reference>
<reference key="8">
    <citation type="journal article" date="2008" name="Plant J.">
        <title>The calmodulin-binding protein kinase 3 is part of heat-shock signal transduction in Arabidopsis thaliana.</title>
        <authorList>
            <person name="Liu H.-T."/>
            <person name="Gao F."/>
            <person name="Li G.-L."/>
            <person name="Han J.-L."/>
            <person name="Liu D.-L."/>
            <person name="Sun D.-Y."/>
            <person name="Zhou R.-G."/>
        </authorList>
    </citation>
    <scope>FUNCTION</scope>
    <scope>DISRUPTION PHENOTYPE</scope>
    <scope>INTERACTION WITH HSFA1A</scope>
</reference>
<reference key="9">
    <citation type="journal article" date="2009" name="Plant Physiol.">
        <title>Large-scale Arabidopsis phosphoproteome profiling reveals novel chloroplast kinase substrates and phosphorylation networks.</title>
        <authorList>
            <person name="Reiland S."/>
            <person name="Messerli G."/>
            <person name="Baerenfaller K."/>
            <person name="Gerrits B."/>
            <person name="Endler A."/>
            <person name="Grossmann J."/>
            <person name="Gruissem W."/>
            <person name="Baginsky S."/>
        </authorList>
    </citation>
    <scope>IDENTIFICATION BY MASS SPECTROMETRY [LARGE SCALE ANALYSIS]</scope>
</reference>
<reference key="10">
    <citation type="journal article" date="2011" name="Front. Plant Sci.">
        <title>Calcium-dependent protein kinases from Arabidopsis show substrate specificity differences in an analysis of 103 substrates.</title>
        <authorList>
            <person name="Curran A."/>
            <person name="Chang I.-F."/>
            <person name="Chang C.-L."/>
            <person name="Garg S."/>
            <person name="Miguel R.M."/>
            <person name="Barron Y.D."/>
            <person name="Li Y."/>
            <person name="Romanowsky S."/>
            <person name="Cushman J.C."/>
            <person name="Gribskov M."/>
            <person name="Harmon A.C."/>
            <person name="Harper J.F."/>
        </authorList>
    </citation>
    <scope>PHOSPHORYLATION AT SER-333</scope>
</reference>
<keyword id="KW-0067">ATP-binding</keyword>
<keyword id="KW-0106">Calcium</keyword>
<keyword id="KW-0418">Kinase</keyword>
<keyword id="KW-0449">Lipoprotein</keyword>
<keyword id="KW-0472">Membrane</keyword>
<keyword id="KW-0479">Metal-binding</keyword>
<keyword id="KW-0519">Myristate</keyword>
<keyword id="KW-0547">Nucleotide-binding</keyword>
<keyword id="KW-0597">Phosphoprotein</keyword>
<keyword id="KW-1185">Reference proteome</keyword>
<keyword id="KW-0677">Repeat</keyword>
<keyword id="KW-0723">Serine/threonine-protein kinase</keyword>
<keyword id="KW-0346">Stress response</keyword>
<keyword id="KW-0808">Transferase</keyword>
<protein>
    <recommendedName>
        <fullName>CDPK-related kinase 1</fullName>
        <shortName>AtCRK1</shortName>
        <ecNumber>2.7.11.1</ecNumber>
    </recommendedName>
    <alternativeName>
        <fullName>Calcium/calmodulin-dependent protein kinase 3</fullName>
    </alternativeName>
    <alternativeName>
        <fullName>Calmodulin-binding protein kinase 3</fullName>
        <shortName>AtCBK3</shortName>
        <shortName>CaM-binding protein kinase 3</shortName>
    </alternativeName>
</protein>
<organism>
    <name type="scientific">Arabidopsis thaliana</name>
    <name type="common">Mouse-ear cress</name>
    <dbReference type="NCBI Taxonomy" id="3702"/>
    <lineage>
        <taxon>Eukaryota</taxon>
        <taxon>Viridiplantae</taxon>
        <taxon>Streptophyta</taxon>
        <taxon>Embryophyta</taxon>
        <taxon>Tracheophyta</taxon>
        <taxon>Spermatophyta</taxon>
        <taxon>Magnoliopsida</taxon>
        <taxon>eudicotyledons</taxon>
        <taxon>Gunneridae</taxon>
        <taxon>Pentapetalae</taxon>
        <taxon>rosids</taxon>
        <taxon>malvids</taxon>
        <taxon>Brassicales</taxon>
        <taxon>Brassicaceae</taxon>
        <taxon>Camelineae</taxon>
        <taxon>Arabidopsis</taxon>
    </lineage>
</organism>
<name>CAMK1_ARATH</name>
<gene>
    <name type="primary">CRK1</name>
    <name type="synonym">CaMK3</name>
    <name type="synonym">CBK3</name>
    <name type="ordered locus">At2g41140</name>
    <name type="ORF">T3K9.9</name>
</gene>
<proteinExistence type="evidence at protein level"/>
<dbReference type="EC" id="2.7.11.1"/>
<dbReference type="EMBL" id="AF435448">
    <property type="protein sequence ID" value="AAL30816.1"/>
    <property type="molecule type" value="mRNA"/>
</dbReference>
<dbReference type="EMBL" id="AF153351">
    <property type="protein sequence ID" value="AAD38058.1"/>
    <property type="molecule type" value="mRNA"/>
</dbReference>
<dbReference type="EMBL" id="AC004261">
    <property type="protein sequence ID" value="AAD12016.1"/>
    <property type="molecule type" value="Genomic_DNA"/>
</dbReference>
<dbReference type="EMBL" id="CP002685">
    <property type="protein sequence ID" value="AEC09936.1"/>
    <property type="molecule type" value="Genomic_DNA"/>
</dbReference>
<dbReference type="PIR" id="T02105">
    <property type="entry name" value="T02105"/>
</dbReference>
<dbReference type="RefSeq" id="NP_181647.1">
    <property type="nucleotide sequence ID" value="NM_129679.2"/>
</dbReference>
<dbReference type="SMR" id="O80673"/>
<dbReference type="BioGRID" id="4050">
    <property type="interactions" value="3"/>
</dbReference>
<dbReference type="FunCoup" id="O80673">
    <property type="interactions" value="535"/>
</dbReference>
<dbReference type="IntAct" id="O80673">
    <property type="interactions" value="1"/>
</dbReference>
<dbReference type="STRING" id="3702.O80673"/>
<dbReference type="iPTMnet" id="O80673"/>
<dbReference type="PaxDb" id="3702-AT2G41140.1"/>
<dbReference type="ProteomicsDB" id="239192"/>
<dbReference type="EnsemblPlants" id="AT2G41140.1">
    <property type="protein sequence ID" value="AT2G41140.1"/>
    <property type="gene ID" value="AT2G41140"/>
</dbReference>
<dbReference type="GeneID" id="818713"/>
<dbReference type="Gramene" id="AT2G41140.1">
    <property type="protein sequence ID" value="AT2G41140.1"/>
    <property type="gene ID" value="AT2G41140"/>
</dbReference>
<dbReference type="KEGG" id="ath:AT2G41140"/>
<dbReference type="Araport" id="AT2G41140"/>
<dbReference type="TAIR" id="AT2G41140">
    <property type="gene designation" value="CRK1"/>
</dbReference>
<dbReference type="eggNOG" id="KOG0032">
    <property type="taxonomic scope" value="Eukaryota"/>
</dbReference>
<dbReference type="HOGENOM" id="CLU_000288_37_2_1"/>
<dbReference type="InParanoid" id="O80673"/>
<dbReference type="OMA" id="GKECEIG"/>
<dbReference type="OrthoDB" id="40902at2759"/>
<dbReference type="PhylomeDB" id="O80673"/>
<dbReference type="SABIO-RK" id="O80673"/>
<dbReference type="PRO" id="PR:O80673"/>
<dbReference type="Proteomes" id="UP000006548">
    <property type="component" value="Chromosome 2"/>
</dbReference>
<dbReference type="ExpressionAtlas" id="O80673">
    <property type="expression patterns" value="baseline and differential"/>
</dbReference>
<dbReference type="GO" id="GO:0016020">
    <property type="term" value="C:membrane"/>
    <property type="evidence" value="ECO:0007669"/>
    <property type="project" value="UniProtKB-SubCell"/>
</dbReference>
<dbReference type="GO" id="GO:0005524">
    <property type="term" value="F:ATP binding"/>
    <property type="evidence" value="ECO:0007669"/>
    <property type="project" value="UniProtKB-KW"/>
</dbReference>
<dbReference type="GO" id="GO:0004683">
    <property type="term" value="F:calcium/calmodulin-dependent protein kinase activity"/>
    <property type="evidence" value="ECO:0000314"/>
    <property type="project" value="UniProtKB"/>
</dbReference>
<dbReference type="GO" id="GO:0005516">
    <property type="term" value="F:calmodulin binding"/>
    <property type="evidence" value="ECO:0000314"/>
    <property type="project" value="UniProtKB"/>
</dbReference>
<dbReference type="GO" id="GO:0046872">
    <property type="term" value="F:metal ion binding"/>
    <property type="evidence" value="ECO:0007669"/>
    <property type="project" value="UniProtKB-KW"/>
</dbReference>
<dbReference type="GO" id="GO:0106310">
    <property type="term" value="F:protein serine kinase activity"/>
    <property type="evidence" value="ECO:0007669"/>
    <property type="project" value="RHEA"/>
</dbReference>
<dbReference type="GO" id="GO:0010286">
    <property type="term" value="P:heat acclimation"/>
    <property type="evidence" value="ECO:0000315"/>
    <property type="project" value="UniProtKB"/>
</dbReference>
<dbReference type="GO" id="GO:0046777">
    <property type="term" value="P:protein autophosphorylation"/>
    <property type="evidence" value="ECO:0000314"/>
    <property type="project" value="UniProtKB"/>
</dbReference>
<dbReference type="CDD" id="cd05117">
    <property type="entry name" value="STKc_CAMK"/>
    <property type="match status" value="1"/>
</dbReference>
<dbReference type="FunFam" id="1.10.510.10:FF:001864">
    <property type="entry name" value="Calcium-dependent protein kinase SK5"/>
    <property type="match status" value="1"/>
</dbReference>
<dbReference type="FunFam" id="1.10.238.10:FF:000233">
    <property type="entry name" value="CDPK-related kinase 1"/>
    <property type="match status" value="1"/>
</dbReference>
<dbReference type="FunFam" id="3.30.200.20:FF:000101">
    <property type="entry name" value="CDPK-related kinase 1"/>
    <property type="match status" value="1"/>
</dbReference>
<dbReference type="FunFam" id="1.10.510.10:FF:001294">
    <property type="entry name" value="CDPK-related kinase 3"/>
    <property type="match status" value="1"/>
</dbReference>
<dbReference type="Gene3D" id="1.10.238.10">
    <property type="entry name" value="EF-hand"/>
    <property type="match status" value="1"/>
</dbReference>
<dbReference type="Gene3D" id="3.30.200.20">
    <property type="entry name" value="Phosphorylase Kinase, domain 1"/>
    <property type="match status" value="1"/>
</dbReference>
<dbReference type="Gene3D" id="1.10.510.10">
    <property type="entry name" value="Transferase(Phosphotransferase) domain 1"/>
    <property type="match status" value="1"/>
</dbReference>
<dbReference type="InterPro" id="IPR050205">
    <property type="entry name" value="CDPK_Ser/Thr_kinases"/>
</dbReference>
<dbReference type="InterPro" id="IPR011992">
    <property type="entry name" value="EF-hand-dom_pair"/>
</dbReference>
<dbReference type="InterPro" id="IPR011009">
    <property type="entry name" value="Kinase-like_dom_sf"/>
</dbReference>
<dbReference type="InterPro" id="IPR000719">
    <property type="entry name" value="Prot_kinase_dom"/>
</dbReference>
<dbReference type="InterPro" id="IPR017441">
    <property type="entry name" value="Protein_kinase_ATP_BS"/>
</dbReference>
<dbReference type="InterPro" id="IPR008271">
    <property type="entry name" value="Ser/Thr_kinase_AS"/>
</dbReference>
<dbReference type="PANTHER" id="PTHR24349">
    <property type="entry name" value="SERINE/THREONINE-PROTEIN KINASE"/>
    <property type="match status" value="1"/>
</dbReference>
<dbReference type="Pfam" id="PF00069">
    <property type="entry name" value="Pkinase"/>
    <property type="match status" value="1"/>
</dbReference>
<dbReference type="SMART" id="SM00220">
    <property type="entry name" value="S_TKc"/>
    <property type="match status" value="1"/>
</dbReference>
<dbReference type="SUPFAM" id="SSF47473">
    <property type="entry name" value="EF-hand"/>
    <property type="match status" value="1"/>
</dbReference>
<dbReference type="SUPFAM" id="SSF56112">
    <property type="entry name" value="Protein kinase-like (PK-like)"/>
    <property type="match status" value="1"/>
</dbReference>
<dbReference type="PROSITE" id="PS00107">
    <property type="entry name" value="PROTEIN_KINASE_ATP"/>
    <property type="match status" value="1"/>
</dbReference>
<dbReference type="PROSITE" id="PS50011">
    <property type="entry name" value="PROTEIN_KINASE_DOM"/>
    <property type="match status" value="1"/>
</dbReference>
<dbReference type="PROSITE" id="PS00108">
    <property type="entry name" value="PROTEIN_KINASE_ST"/>
    <property type="match status" value="1"/>
</dbReference>
<sequence length="576" mass="64315">MGICHGKPVEQQSKSLPVSGETNEAPTNSQPPAKSSGFPFYSPSPVPSLFKSSPSVSSSVSSTPLRIFKRPFPPPSPAKHIRAFLARRYGSVKPNEVSIPEGKECEIGLDKSFGFSKQFASHYEIDGEVGRGHFGYTCSAKGKKGSLKGQEVAVKVIPKSKMTTAIAIEDVSREVKMLRALTGHKNLVQFYDAFEDDENVYIVMELCKGGELLDKILQRGGKYSEDDAKKVMVQILSVVAYCHLQGVVHRDLKPENFLFSTKDETSPLKAIDFGLSDYVKPDERLNDIVGSAYYVAPEVLHRTYGTEADMWSIGVIAYILLCGSRPFWARTESGIFRAVLKAEPNFEEAPWPSLSPEAVDFVKRLLNKDYRKRLTAAQALCHPWLVGSHELKIPSDMIIYKLVKVYIMSTSLRKSALAALAKTLTVPQLAYLREQFTLLGPSKNGYISMQNYKTAILKSSTDAMKDSRVFDFVHMISCLQYKKLDFEEFCASALSVYQLEAMETWEQHARRAYELFEKDGNRPIMIEELASELGLGPSVPVHVVLQDWIRHSDGKLSFLGFVRLLHGVSSRTLQKA</sequence>
<evidence type="ECO:0000250" key="1"/>
<evidence type="ECO:0000250" key="2">
    <source>
        <dbReference type="UniProtKB" id="Q9FKW4"/>
    </source>
</evidence>
<evidence type="ECO:0000250" key="3">
    <source>
        <dbReference type="UniProtKB" id="Q9SG12"/>
    </source>
</evidence>
<evidence type="ECO:0000255" key="4">
    <source>
        <dbReference type="PROSITE-ProRule" id="PRU00159"/>
    </source>
</evidence>
<evidence type="ECO:0000255" key="5">
    <source>
        <dbReference type="PROSITE-ProRule" id="PRU10027"/>
    </source>
</evidence>
<evidence type="ECO:0000256" key="6">
    <source>
        <dbReference type="SAM" id="MobiDB-lite"/>
    </source>
</evidence>
<evidence type="ECO:0000269" key="7">
    <source>
    </source>
</evidence>
<evidence type="ECO:0000269" key="8">
    <source>
    </source>
</evidence>
<evidence type="ECO:0000269" key="9">
    <source>
    </source>
</evidence>
<feature type="initiator methionine" description="Removed" evidence="3">
    <location>
        <position position="1"/>
    </location>
</feature>
<feature type="chain" id="PRO_0000420528" description="CDPK-related kinase 1">
    <location>
        <begin position="2"/>
        <end position="576"/>
    </location>
</feature>
<feature type="domain" description="Protein kinase" evidence="4">
    <location>
        <begin position="123"/>
        <end position="385"/>
    </location>
</feature>
<feature type="domain" description="EF-hand 1">
    <location>
        <begin position="427"/>
        <end position="463"/>
    </location>
</feature>
<feature type="domain" description="EF-hand 2">
    <location>
        <begin position="464"/>
        <end position="499"/>
    </location>
</feature>
<feature type="domain" description="EF-hand 3">
    <location>
        <begin position="500"/>
        <end position="539"/>
    </location>
</feature>
<feature type="domain" description="EF-hand 4">
    <location>
        <begin position="542"/>
        <end position="571"/>
    </location>
</feature>
<feature type="region of interest" description="Disordered" evidence="6">
    <location>
        <begin position="1"/>
        <end position="39"/>
    </location>
</feature>
<feature type="region of interest" description="Autoinhibitory domain" evidence="1">
    <location>
        <begin position="390"/>
        <end position="420"/>
    </location>
</feature>
<feature type="region of interest" description="Calmodulin binding (CaMBD)">
    <location>
        <begin position="409"/>
        <end position="429"/>
    </location>
</feature>
<feature type="compositionally biased region" description="Polar residues" evidence="6">
    <location>
        <begin position="10"/>
        <end position="33"/>
    </location>
</feature>
<feature type="active site" description="Proton acceptor" evidence="4 5">
    <location>
        <position position="251"/>
    </location>
</feature>
<feature type="binding site" evidence="4">
    <location>
        <begin position="129"/>
        <end position="137"/>
    </location>
    <ligand>
        <name>ATP</name>
        <dbReference type="ChEBI" id="CHEBI:30616"/>
    </ligand>
</feature>
<feature type="binding site" evidence="4">
    <location>
        <position position="155"/>
    </location>
    <ligand>
        <name>ATP</name>
        <dbReference type="ChEBI" id="CHEBI:30616"/>
    </ligand>
</feature>
<feature type="binding site" evidence="1">
    <location>
        <position position="442"/>
    </location>
    <ligand>
        <name>Ca(2+)</name>
        <dbReference type="ChEBI" id="CHEBI:29108"/>
        <label>1</label>
    </ligand>
</feature>
<feature type="binding site" evidence="1">
    <location>
        <position position="444"/>
    </location>
    <ligand>
        <name>Ca(2+)</name>
        <dbReference type="ChEBI" id="CHEBI:29108"/>
        <label>1</label>
    </ligand>
</feature>
<feature type="binding site" evidence="1">
    <location>
        <position position="446"/>
    </location>
    <ligand>
        <name>Ca(2+)</name>
        <dbReference type="ChEBI" id="CHEBI:29108"/>
        <label>1</label>
    </ligand>
</feature>
<feature type="binding site" evidence="1">
    <location>
        <position position="483"/>
    </location>
    <ligand>
        <name>Ca(2+)</name>
        <dbReference type="ChEBI" id="CHEBI:29108"/>
        <label>2</label>
    </ligand>
</feature>
<feature type="binding site" evidence="1">
    <location>
        <position position="488"/>
    </location>
    <ligand>
        <name>Ca(2+)</name>
        <dbReference type="ChEBI" id="CHEBI:29108"/>
        <label>2</label>
    </ligand>
</feature>
<feature type="binding site" evidence="1">
    <location>
        <position position="519"/>
    </location>
    <ligand>
        <name>Ca(2+)</name>
        <dbReference type="ChEBI" id="CHEBI:29108"/>
        <label>3</label>
    </ligand>
</feature>
<feature type="binding site" evidence="1">
    <location>
        <position position="521"/>
    </location>
    <ligand>
        <name>Ca(2+)</name>
        <dbReference type="ChEBI" id="CHEBI:29108"/>
        <label>3</label>
    </ligand>
</feature>
<feature type="binding site" evidence="1">
    <location>
        <position position="528"/>
    </location>
    <ligand>
        <name>Ca(2+)</name>
        <dbReference type="ChEBI" id="CHEBI:29108"/>
        <label>3</label>
    </ligand>
</feature>
<feature type="binding site" evidence="1">
    <location>
        <position position="553"/>
    </location>
    <ligand>
        <name>Ca(2+)</name>
        <dbReference type="ChEBI" id="CHEBI:29108"/>
        <label>4</label>
    </ligand>
</feature>
<feature type="binding site" evidence="1">
    <location>
        <position position="555"/>
    </location>
    <ligand>
        <name>Ca(2+)</name>
        <dbReference type="ChEBI" id="CHEBI:29108"/>
        <label>4</label>
    </ligand>
</feature>
<feature type="modified residue" description="Phosphoserine" evidence="2">
    <location>
        <position position="291"/>
    </location>
</feature>
<feature type="modified residue" description="Phosphoserine; by CPK1 and CPK34" evidence="9">
    <location>
        <position position="333"/>
    </location>
</feature>
<feature type="modified residue" description="Phosphoserine" evidence="2">
    <location>
        <position position="557"/>
    </location>
</feature>
<feature type="lipid moiety-binding region" description="N-myristoyl glycine" evidence="1">
    <location>
        <position position="2"/>
    </location>
</feature>
<accession>O80673</accession>
<comment type="function">
    <text evidence="1 7 8">May play a role in signal transduction pathways that involve calcium as a second messenger (By similarity). Serine/threonine kinase that phosphorylates histone H3. Confers thermotolerance; involved in the heat-shock-mediated calmodulin-dependent signal transduction leading to the activation of heat-shock transcription factors (HSFs); phosphorylates HSFA1A.</text>
</comment>
<comment type="catalytic activity">
    <reaction evidence="7">
        <text>L-seryl-[protein] + ATP = O-phospho-L-seryl-[protein] + ADP + H(+)</text>
        <dbReference type="Rhea" id="RHEA:17989"/>
        <dbReference type="Rhea" id="RHEA-COMP:9863"/>
        <dbReference type="Rhea" id="RHEA-COMP:11604"/>
        <dbReference type="ChEBI" id="CHEBI:15378"/>
        <dbReference type="ChEBI" id="CHEBI:29999"/>
        <dbReference type="ChEBI" id="CHEBI:30616"/>
        <dbReference type="ChEBI" id="CHEBI:83421"/>
        <dbReference type="ChEBI" id="CHEBI:456216"/>
        <dbReference type="EC" id="2.7.11.1"/>
    </reaction>
</comment>
<comment type="catalytic activity">
    <reaction evidence="7">
        <text>L-threonyl-[protein] + ATP = O-phospho-L-threonyl-[protein] + ADP + H(+)</text>
        <dbReference type="Rhea" id="RHEA:46608"/>
        <dbReference type="Rhea" id="RHEA-COMP:11060"/>
        <dbReference type="Rhea" id="RHEA-COMP:11605"/>
        <dbReference type="ChEBI" id="CHEBI:15378"/>
        <dbReference type="ChEBI" id="CHEBI:30013"/>
        <dbReference type="ChEBI" id="CHEBI:30616"/>
        <dbReference type="ChEBI" id="CHEBI:61977"/>
        <dbReference type="ChEBI" id="CHEBI:456216"/>
        <dbReference type="EC" id="2.7.11.1"/>
    </reaction>
</comment>
<comment type="activity regulation">
    <text evidence="7">Activated by calcium and calmodulin. Autophosphorylation may play an important role in the regulation of the kinase activity.</text>
</comment>
<comment type="biophysicochemical properties">
    <kinetics>
        <KM evidence="7">5.9 uM for histone H3 (at pH 7.5 and 30 degrees Celsius)</KM>
        <KM evidence="7">4.4 uM for histone H3 (in the presence of CaM2 at pH 7.5 and 30 degrees Celsius)</KM>
        <KM evidence="7">4.5 uM for histone H3 (in the presence of CaM4 at pH 7.5 and 30 degrees Celsius)</KM>
        <KM evidence="7">4.9 uM for histone H3 (in the presence of CaM7 at pH 7.5 and 30 degrees Celsius)</KM>
        <KM evidence="7">5.3 uM for histone H3 (in the presence of CaM8 at pH 7.5 and 30 degrees Celsius)</KM>
        <KM evidence="7">5.2 uM for syntide-2 (at pH 7.5 and 30 degrees Celsius)</KM>
        <KM evidence="7">3.8 uM for syntide-2 (in the presence of CaM2 at pH 7.5 and 30 degrees Celsius)</KM>
        <KM evidence="7">4 uM for syntide-2 (in the presence of CaM4 at pH 7.5 and 30 degrees Celsius)</KM>
        <KM evidence="7">4.6 uM for syntide-2 (in the presence of CaM7 at pH 7.5 and 30 degrees Celsius)</KM>
        <KM evidence="7">4.9 uM for syntide-2 (in the presence of CaM8 at pH 7.5 and 30 degrees Celsius)</KM>
        <Vmax evidence="7">28.3 nmol/min/mg enzyme with histone H3 as substrate (at pH 7.5 and 30 degrees Celsius)</Vmax>
        <Vmax evidence="7">354.4 nmol/min/mg enzyme with histone H3 as substrate (in the presence of CaM2 at pH 7.5 and 30 degrees Celsius)</Vmax>
        <Vmax evidence="7">358.5 nmol/min/mg enzyme with histone H3 as substrate (in the presence of CaM4 at pH 7.5 and 30 degrees Celsius)</Vmax>
        <Vmax evidence="7">349.2 nmol/min/mg enzyme with histone H3 as substrate (in the presence of CaM7 at pH 7.5 and 30 degrees Celsius)</Vmax>
        <Vmax evidence="7">341.0 nmol/min/mg enzyme with histone H3 as substrate (in the presence of CaM8 at pH 7.5 and 30 degrees Celsius)</Vmax>
        <Vmax evidence="7">105.9 nmol/min/mg enzyme with syntide-2 as substrate (at pH 7.5 and 30 degrees Celsius)</Vmax>
        <Vmax evidence="7">768.2 nmol/min/mg enzyme with syntide-2 as substrate (in the presence of CaM2 at pH 7.5 and 30 degrees Celsius)</Vmax>
        <Vmax evidence="7">772.3 nmol/min/mg enzyme with syntide-2 as substrate (in the presence of CaM4 at pH 7.5 and 30 degrees Celsius)</Vmax>
        <Vmax evidence="7">759.1 nmol/min/mg enzyme with syntide-2 as substrate (in the presence of CaM7 at pH 7.5 and 30 degrees Celsius)</Vmax>
        <Vmax evidence="7">751.0 nmol/min/mg enzyme with syntide-2 as substrate (in the presence of CaM8 at pH 7.5 and 30 degrees Celsius)</Vmax>
    </kinetics>
</comment>
<comment type="subunit">
    <text evidence="7 8">Binds calmodulin (CaM) in a calcium-dependent manner. Interacts with HSFA1A.</text>
</comment>
<comment type="interaction">
    <interactant intactId="EBI-1804894">
        <id>O80673</id>
    </interactant>
    <interactant intactId="EBI-1544927">
        <id>P41151</id>
        <label>HSFA1A</label>
    </interactant>
    <organismsDiffer>false</organismsDiffer>
    <experiments>3</experiments>
</comment>
<comment type="subcellular location">
    <subcellularLocation>
        <location evidence="1">Membrane</location>
        <topology evidence="1">Lipid-anchor</topology>
        <orientation evidence="1">Cytoplasmic side</orientation>
    </subcellularLocation>
</comment>
<comment type="domain">
    <text evidence="1">There are 3 contiguous domains conserved in the CDPK subfamily: a kinase domain, an autoinhibitory (junction) domain and a calmodulin-like domain. The autoinhibitory domain (390-420) inactivates kinase activity under calcium-free conditions (By similarity).</text>
</comment>
<comment type="PTM">
    <text evidence="9">Autophosphorylated.</text>
</comment>
<comment type="disruption phenotype">
    <text evidence="8">Impaired basal thermotolerance.</text>
</comment>
<comment type="similarity">
    <text evidence="4">Belongs to the protein kinase superfamily. Ser/Thr protein kinase family. CDPK subfamily.</text>
</comment>